<reference key="1">
    <citation type="journal article" date="2005" name="Science">
        <title>The genome of the basidiomycetous yeast and human pathogen Cryptococcus neoformans.</title>
        <authorList>
            <person name="Loftus B.J."/>
            <person name="Fung E."/>
            <person name="Roncaglia P."/>
            <person name="Rowley D."/>
            <person name="Amedeo P."/>
            <person name="Bruno D."/>
            <person name="Vamathevan J."/>
            <person name="Miranda M."/>
            <person name="Anderson I.J."/>
            <person name="Fraser J.A."/>
            <person name="Allen J.E."/>
            <person name="Bosdet I.E."/>
            <person name="Brent M.R."/>
            <person name="Chiu R."/>
            <person name="Doering T.L."/>
            <person name="Donlin M.J."/>
            <person name="D'Souza C.A."/>
            <person name="Fox D.S."/>
            <person name="Grinberg V."/>
            <person name="Fu J."/>
            <person name="Fukushima M."/>
            <person name="Haas B.J."/>
            <person name="Huang J.C."/>
            <person name="Janbon G."/>
            <person name="Jones S.J.M."/>
            <person name="Koo H.L."/>
            <person name="Krzywinski M.I."/>
            <person name="Kwon-Chung K.J."/>
            <person name="Lengeler K.B."/>
            <person name="Maiti R."/>
            <person name="Marra M.A."/>
            <person name="Marra R.E."/>
            <person name="Mathewson C.A."/>
            <person name="Mitchell T.G."/>
            <person name="Pertea M."/>
            <person name="Riggs F.R."/>
            <person name="Salzberg S.L."/>
            <person name="Schein J.E."/>
            <person name="Shvartsbeyn A."/>
            <person name="Shin H."/>
            <person name="Shumway M."/>
            <person name="Specht C.A."/>
            <person name="Suh B.B."/>
            <person name="Tenney A."/>
            <person name="Utterback T.R."/>
            <person name="Wickes B.L."/>
            <person name="Wortman J.R."/>
            <person name="Wye N.H."/>
            <person name="Kronstad J.W."/>
            <person name="Lodge J.K."/>
            <person name="Heitman J."/>
            <person name="Davis R.W."/>
            <person name="Fraser C.M."/>
            <person name="Hyman R.W."/>
        </authorList>
    </citation>
    <scope>NUCLEOTIDE SEQUENCE [LARGE SCALE GENOMIC DNA]</scope>
    <source>
        <strain>B-3501A</strain>
    </source>
</reference>
<comment type="function">
    <text evidence="1">ATP-binding RNA helicase involved in the biogenesis of 60S ribosomal subunits and is required for the normal formation of 25S and 5.8S rRNAs.</text>
</comment>
<comment type="catalytic activity">
    <reaction>
        <text>ATP + H2O = ADP + phosphate + H(+)</text>
        <dbReference type="Rhea" id="RHEA:13065"/>
        <dbReference type="ChEBI" id="CHEBI:15377"/>
        <dbReference type="ChEBI" id="CHEBI:15378"/>
        <dbReference type="ChEBI" id="CHEBI:30616"/>
        <dbReference type="ChEBI" id="CHEBI:43474"/>
        <dbReference type="ChEBI" id="CHEBI:456216"/>
        <dbReference type="EC" id="3.6.4.13"/>
    </reaction>
</comment>
<comment type="subcellular location">
    <subcellularLocation>
        <location evidence="1">Nucleus</location>
        <location evidence="1">Nucleolus</location>
    </subcellularLocation>
</comment>
<comment type="domain">
    <text>The Q motif is unique to and characteristic of the DEAD box family of RNA helicases and controls ATP binding and hydrolysis.</text>
</comment>
<comment type="similarity">
    <text evidence="5">Belongs to the DEAD box helicase family. DDX24/MAK5 subfamily.</text>
</comment>
<evidence type="ECO:0000250" key="1"/>
<evidence type="ECO:0000255" key="2">
    <source>
        <dbReference type="PROSITE-ProRule" id="PRU00541"/>
    </source>
</evidence>
<evidence type="ECO:0000255" key="3">
    <source>
        <dbReference type="PROSITE-ProRule" id="PRU00542"/>
    </source>
</evidence>
<evidence type="ECO:0000256" key="4">
    <source>
        <dbReference type="SAM" id="MobiDB-lite"/>
    </source>
</evidence>
<evidence type="ECO:0000305" key="5"/>
<accession>P0CQ91</accession>
<accession>Q55JG1</accession>
<accession>Q5KC99</accession>
<protein>
    <recommendedName>
        <fullName>ATP-dependent RNA helicase MAK5</fullName>
        <ecNumber>3.6.4.13</ecNumber>
    </recommendedName>
</protein>
<keyword id="KW-0067">ATP-binding</keyword>
<keyword id="KW-0347">Helicase</keyword>
<keyword id="KW-0378">Hydrolase</keyword>
<keyword id="KW-0547">Nucleotide-binding</keyword>
<keyword id="KW-0539">Nucleus</keyword>
<keyword id="KW-0690">Ribosome biogenesis</keyword>
<keyword id="KW-0694">RNA-binding</keyword>
<keyword id="KW-0698">rRNA processing</keyword>
<feature type="chain" id="PRO_0000410256" description="ATP-dependent RNA helicase MAK5">
    <location>
        <begin position="1"/>
        <end position="772"/>
    </location>
</feature>
<feature type="domain" description="Helicase ATP-binding" evidence="2">
    <location>
        <begin position="203"/>
        <end position="424"/>
    </location>
</feature>
<feature type="domain" description="Helicase C-terminal" evidence="3">
    <location>
        <begin position="473"/>
        <end position="618"/>
    </location>
</feature>
<feature type="region of interest" description="Disordered" evidence="4">
    <location>
        <begin position="1"/>
        <end position="30"/>
    </location>
</feature>
<feature type="region of interest" description="Disordered" evidence="4">
    <location>
        <begin position="84"/>
        <end position="138"/>
    </location>
</feature>
<feature type="region of interest" description="Disordered" evidence="4">
    <location>
        <begin position="663"/>
        <end position="689"/>
    </location>
</feature>
<feature type="region of interest" description="Disordered" evidence="4">
    <location>
        <begin position="748"/>
        <end position="772"/>
    </location>
</feature>
<feature type="short sequence motif" description="Q motif">
    <location>
        <begin position="172"/>
        <end position="200"/>
    </location>
</feature>
<feature type="short sequence motif" description="DEAD box">
    <location>
        <begin position="344"/>
        <end position="347"/>
    </location>
</feature>
<feature type="compositionally biased region" description="Basic residues" evidence="4">
    <location>
        <begin position="8"/>
        <end position="17"/>
    </location>
</feature>
<feature type="compositionally biased region" description="Basic and acidic residues" evidence="4">
    <location>
        <begin position="103"/>
        <end position="112"/>
    </location>
</feature>
<feature type="compositionally biased region" description="Acidic residues" evidence="4">
    <location>
        <begin position="128"/>
        <end position="138"/>
    </location>
</feature>
<feature type="compositionally biased region" description="Acidic residues" evidence="4">
    <location>
        <begin position="663"/>
        <end position="673"/>
    </location>
</feature>
<feature type="compositionally biased region" description="Basic residues" evidence="4">
    <location>
        <begin position="752"/>
        <end position="772"/>
    </location>
</feature>
<feature type="binding site" evidence="2">
    <location>
        <begin position="216"/>
        <end position="223"/>
    </location>
    <ligand>
        <name>ATP</name>
        <dbReference type="ChEBI" id="CHEBI:30616"/>
    </ligand>
</feature>
<proteinExistence type="inferred from homology"/>
<dbReference type="EC" id="3.6.4.13"/>
<dbReference type="EMBL" id="AAEY01000055">
    <property type="protein sequence ID" value="EAL17899.1"/>
    <property type="molecule type" value="Genomic_DNA"/>
</dbReference>
<dbReference type="RefSeq" id="XP_772546.1">
    <property type="nucleotide sequence ID" value="XM_767453.1"/>
</dbReference>
<dbReference type="SMR" id="P0CQ91"/>
<dbReference type="GeneID" id="4939069"/>
<dbReference type="KEGG" id="cnb:CNBL0260"/>
<dbReference type="VEuPathDB" id="FungiDB:CNBL0260"/>
<dbReference type="HOGENOM" id="CLU_003041_13_0_1"/>
<dbReference type="OrthoDB" id="7216at5206"/>
<dbReference type="GO" id="GO:0005730">
    <property type="term" value="C:nucleolus"/>
    <property type="evidence" value="ECO:0007669"/>
    <property type="project" value="UniProtKB-SubCell"/>
</dbReference>
<dbReference type="GO" id="GO:0005524">
    <property type="term" value="F:ATP binding"/>
    <property type="evidence" value="ECO:0007669"/>
    <property type="project" value="UniProtKB-KW"/>
</dbReference>
<dbReference type="GO" id="GO:0016887">
    <property type="term" value="F:ATP hydrolysis activity"/>
    <property type="evidence" value="ECO:0007669"/>
    <property type="project" value="RHEA"/>
</dbReference>
<dbReference type="GO" id="GO:0003723">
    <property type="term" value="F:RNA binding"/>
    <property type="evidence" value="ECO:0007669"/>
    <property type="project" value="UniProtKB-KW"/>
</dbReference>
<dbReference type="GO" id="GO:0003724">
    <property type="term" value="F:RNA helicase activity"/>
    <property type="evidence" value="ECO:0007669"/>
    <property type="project" value="UniProtKB-EC"/>
</dbReference>
<dbReference type="GO" id="GO:0006364">
    <property type="term" value="P:rRNA processing"/>
    <property type="evidence" value="ECO:0007669"/>
    <property type="project" value="UniProtKB-KW"/>
</dbReference>
<dbReference type="CDD" id="cd17946">
    <property type="entry name" value="DEADc_DDX24"/>
    <property type="match status" value="1"/>
</dbReference>
<dbReference type="CDD" id="cd18787">
    <property type="entry name" value="SF2_C_DEAD"/>
    <property type="match status" value="1"/>
</dbReference>
<dbReference type="Gene3D" id="3.40.50.300">
    <property type="entry name" value="P-loop containing nucleotide triphosphate hydrolases"/>
    <property type="match status" value="2"/>
</dbReference>
<dbReference type="InterPro" id="IPR011545">
    <property type="entry name" value="DEAD/DEAH_box_helicase_dom"/>
</dbReference>
<dbReference type="InterPro" id="IPR014001">
    <property type="entry name" value="Helicase_ATP-bd"/>
</dbReference>
<dbReference type="InterPro" id="IPR001650">
    <property type="entry name" value="Helicase_C-like"/>
</dbReference>
<dbReference type="InterPro" id="IPR027417">
    <property type="entry name" value="P-loop_NTPase"/>
</dbReference>
<dbReference type="InterPro" id="IPR000629">
    <property type="entry name" value="RNA-helicase_DEAD-box_CS"/>
</dbReference>
<dbReference type="PANTHER" id="PTHR24031">
    <property type="entry name" value="RNA HELICASE"/>
    <property type="match status" value="1"/>
</dbReference>
<dbReference type="Pfam" id="PF00270">
    <property type="entry name" value="DEAD"/>
    <property type="match status" value="1"/>
</dbReference>
<dbReference type="Pfam" id="PF00271">
    <property type="entry name" value="Helicase_C"/>
    <property type="match status" value="1"/>
</dbReference>
<dbReference type="SMART" id="SM00487">
    <property type="entry name" value="DEXDc"/>
    <property type="match status" value="1"/>
</dbReference>
<dbReference type="SMART" id="SM00490">
    <property type="entry name" value="HELICc"/>
    <property type="match status" value="1"/>
</dbReference>
<dbReference type="SUPFAM" id="SSF52540">
    <property type="entry name" value="P-loop containing nucleoside triphosphate hydrolases"/>
    <property type="match status" value="1"/>
</dbReference>
<dbReference type="PROSITE" id="PS00039">
    <property type="entry name" value="DEAD_ATP_HELICASE"/>
    <property type="match status" value="1"/>
</dbReference>
<dbReference type="PROSITE" id="PS51192">
    <property type="entry name" value="HELICASE_ATP_BIND_1"/>
    <property type="match status" value="1"/>
</dbReference>
<dbReference type="PROSITE" id="PS51194">
    <property type="entry name" value="HELICASE_CTER"/>
    <property type="match status" value="1"/>
</dbReference>
<dbReference type="PROSITE" id="PS51195">
    <property type="entry name" value="Q_MOTIF"/>
    <property type="match status" value="1"/>
</dbReference>
<organism>
    <name type="scientific">Cryptococcus neoformans var. neoformans serotype D (strain B-3501A)</name>
    <name type="common">Filobasidiella neoformans</name>
    <dbReference type="NCBI Taxonomy" id="283643"/>
    <lineage>
        <taxon>Eukaryota</taxon>
        <taxon>Fungi</taxon>
        <taxon>Dikarya</taxon>
        <taxon>Basidiomycota</taxon>
        <taxon>Agaricomycotina</taxon>
        <taxon>Tremellomycetes</taxon>
        <taxon>Tremellales</taxon>
        <taxon>Cryptococcaceae</taxon>
        <taxon>Cryptococcus</taxon>
        <taxon>Cryptococcus neoformans species complex</taxon>
    </lineage>
</organism>
<sequence length="772" mass="85510">MAKIDKKTKLKLNKKSVRAPSKPTTEKKPKKYVTADTLTWKPVKTSSFSGIDGGGGMMMLEELEDVGIEWEETDGGRKIAKFVEVESKTSKGKKNAAQEEPNQEGRGDDEKASSASETEEGKKADDKEAVEEDDEEEFPDFAGFAEEDLNAADEEEHPNLDDEPAFNDDLLPEWSSISLHPSLKRSFLASSFTAPTAIQSRAIPAGITGRDVVGVAETGSGKTLAYSLPILHYLLGQRKSKAGIKRPLSALVLCPTRELALQVMDHLNALLKHALATPDGEKPQGPPRVSVGSVVGGLSAQKQKRILERGCDVIVATPGRLWDLIKADDELATSVRTLRFLVIDEADRMIENGHFAELESIVKLTQRSTAQQGPDDDDPVFQAMATLFEESTAREDMQTFVFSATLSKDLQKNLKRRSRSWKGKGKRSSTLEDLVEKLDFRDENPEVIDLSPEGGVVSSLRESMIESTKDDKDLYLYYFLLRYPGRSIVFVNSIDSIRRLLPLLTLLQLPVFPLHSHLQQKQRLKNLDRFKSNPKGILIATDVAARGLDIPQVDHVVHFNLPRTADAYIHRSGRTARAQNEGFALQLVSPDEKSVQRALMKSLERTHELPDLPIEAGFLPSLRERLRVATEIEKAQHRATKATHDKNWLLEAAEAMDIDIDPSMLDGEDDDPDAPYYKPKKQDRGKGKASVENLKMELKALLQEKLVARGVSIRYPTSGSKVIVDDLIKSTGHGMLLGASTSKAYDQVEKTGKRKLGSGRPGAVKKKKVEGR</sequence>
<name>MAK5_CRYNB</name>
<gene>
    <name type="primary">MAK5</name>
    <name type="ordered locus">CNBL0260</name>
</gene>